<protein>
    <recommendedName>
        <fullName evidence="1">Probable D-serine dehydratase</fullName>
        <ecNumber evidence="1">4.3.1.18</ecNumber>
    </recommendedName>
    <alternativeName>
        <fullName evidence="1">D-serine deaminase</fullName>
        <shortName evidence="1">DSD</shortName>
    </alternativeName>
</protein>
<gene>
    <name evidence="1" type="primary">dsdA</name>
    <name type="ordered locus">AB57_1052</name>
</gene>
<organism>
    <name type="scientific">Acinetobacter baumannii (strain AB0057)</name>
    <dbReference type="NCBI Taxonomy" id="480119"/>
    <lineage>
        <taxon>Bacteria</taxon>
        <taxon>Pseudomonadati</taxon>
        <taxon>Pseudomonadota</taxon>
        <taxon>Gammaproteobacteria</taxon>
        <taxon>Moraxellales</taxon>
        <taxon>Moraxellaceae</taxon>
        <taxon>Acinetobacter</taxon>
        <taxon>Acinetobacter calcoaceticus/baumannii complex</taxon>
    </lineage>
</organism>
<comment type="catalytic activity">
    <reaction evidence="1">
        <text>D-serine = pyruvate + NH4(+)</text>
        <dbReference type="Rhea" id="RHEA:13977"/>
        <dbReference type="ChEBI" id="CHEBI:15361"/>
        <dbReference type="ChEBI" id="CHEBI:28938"/>
        <dbReference type="ChEBI" id="CHEBI:35247"/>
        <dbReference type="EC" id="4.3.1.18"/>
    </reaction>
</comment>
<comment type="cofactor">
    <cofactor evidence="1">
        <name>pyridoxal 5'-phosphate</name>
        <dbReference type="ChEBI" id="CHEBI:597326"/>
    </cofactor>
</comment>
<comment type="similarity">
    <text evidence="1">Belongs to the serine/threonine dehydratase family. DsdA subfamily.</text>
</comment>
<evidence type="ECO:0000255" key="1">
    <source>
        <dbReference type="HAMAP-Rule" id="MF_01030"/>
    </source>
</evidence>
<name>SDHD_ACIB5</name>
<dbReference type="EC" id="4.3.1.18" evidence="1"/>
<dbReference type="EMBL" id="CP001182">
    <property type="protein sequence ID" value="ACJ40841.1"/>
    <property type="molecule type" value="Genomic_DNA"/>
</dbReference>
<dbReference type="RefSeq" id="WP_000859908.1">
    <property type="nucleotide sequence ID" value="NC_011586.2"/>
</dbReference>
<dbReference type="SMR" id="B7I8P7"/>
<dbReference type="KEGG" id="abn:AB57_1052"/>
<dbReference type="HOGENOM" id="CLU_035707_0_0_6"/>
<dbReference type="Proteomes" id="UP000007094">
    <property type="component" value="Chromosome"/>
</dbReference>
<dbReference type="GO" id="GO:0008721">
    <property type="term" value="F:D-serine ammonia-lyase activity"/>
    <property type="evidence" value="ECO:0007669"/>
    <property type="project" value="UniProtKB-EC"/>
</dbReference>
<dbReference type="GO" id="GO:0016836">
    <property type="term" value="F:hydro-lyase activity"/>
    <property type="evidence" value="ECO:0007669"/>
    <property type="project" value="UniProtKB-UniRule"/>
</dbReference>
<dbReference type="GO" id="GO:0030170">
    <property type="term" value="F:pyridoxal phosphate binding"/>
    <property type="evidence" value="ECO:0007669"/>
    <property type="project" value="InterPro"/>
</dbReference>
<dbReference type="GO" id="GO:0036088">
    <property type="term" value="P:D-serine catabolic process"/>
    <property type="evidence" value="ECO:0007669"/>
    <property type="project" value="TreeGrafter"/>
</dbReference>
<dbReference type="GO" id="GO:0009097">
    <property type="term" value="P:isoleucine biosynthetic process"/>
    <property type="evidence" value="ECO:0007669"/>
    <property type="project" value="TreeGrafter"/>
</dbReference>
<dbReference type="CDD" id="cd06447">
    <property type="entry name" value="D-Ser-dehyd"/>
    <property type="match status" value="1"/>
</dbReference>
<dbReference type="FunFam" id="3.40.50.1100:FF:000018">
    <property type="entry name" value="D-serine dehydratase"/>
    <property type="match status" value="1"/>
</dbReference>
<dbReference type="Gene3D" id="3.40.50.1100">
    <property type="match status" value="2"/>
</dbReference>
<dbReference type="HAMAP" id="MF_01030">
    <property type="entry name" value="D_Ser_dehydrat"/>
    <property type="match status" value="1"/>
</dbReference>
<dbReference type="InterPro" id="IPR011780">
    <property type="entry name" value="D_Ser_am_lyase"/>
</dbReference>
<dbReference type="InterPro" id="IPR050147">
    <property type="entry name" value="Ser/Thr_Dehydratase"/>
</dbReference>
<dbReference type="InterPro" id="IPR000634">
    <property type="entry name" value="Ser/Thr_deHydtase_PyrdxlP-BS"/>
</dbReference>
<dbReference type="InterPro" id="IPR001926">
    <property type="entry name" value="TrpB-like_PALP"/>
</dbReference>
<dbReference type="InterPro" id="IPR036052">
    <property type="entry name" value="TrpB-like_PALP_sf"/>
</dbReference>
<dbReference type="NCBIfam" id="TIGR02035">
    <property type="entry name" value="D_Ser_am_lyase"/>
    <property type="match status" value="1"/>
</dbReference>
<dbReference type="NCBIfam" id="NF002823">
    <property type="entry name" value="PRK02991.1"/>
    <property type="match status" value="1"/>
</dbReference>
<dbReference type="PANTHER" id="PTHR48078:SF9">
    <property type="entry name" value="D-SERINE DEHYDRATASE"/>
    <property type="match status" value="1"/>
</dbReference>
<dbReference type="PANTHER" id="PTHR48078">
    <property type="entry name" value="THREONINE DEHYDRATASE, MITOCHONDRIAL-RELATED"/>
    <property type="match status" value="1"/>
</dbReference>
<dbReference type="Pfam" id="PF00291">
    <property type="entry name" value="PALP"/>
    <property type="match status" value="1"/>
</dbReference>
<dbReference type="SUPFAM" id="SSF53686">
    <property type="entry name" value="Tryptophan synthase beta subunit-like PLP-dependent enzymes"/>
    <property type="match status" value="1"/>
</dbReference>
<dbReference type="PROSITE" id="PS00165">
    <property type="entry name" value="DEHYDRATASE_SER_THR"/>
    <property type="match status" value="1"/>
</dbReference>
<feature type="chain" id="PRO_1000213342" description="Probable D-serine dehydratase">
    <location>
        <begin position="1"/>
        <end position="444"/>
    </location>
</feature>
<feature type="modified residue" description="N6-(pyridoxal phosphate)lysine" evidence="1">
    <location>
        <position position="118"/>
    </location>
</feature>
<proteinExistence type="inferred from homology"/>
<keyword id="KW-0456">Lyase</keyword>
<keyword id="KW-0663">Pyridoxal phosphate</keyword>
<sequence>MKTVQLDQLKQQFPLIQTLQDYQETFWFNPHRYPLNEALAKVGLTEQDVKEAEARLARFAPYLAKVFPETQAQYGKIESALVKIADMQQALSLQKHKTLTGKLWLKKDSHLPISGSIKARGGIYEVLAHAEKLAIEAGLLKLEDDYSKLDQDSFRTFFSKYQIAVGSTGNLGLSIGIMSAKLGFRVSVHMSADARQWKKDKLRSLGVNVVEYASDYGVAVEEGRKAAEQDPFCFFIDDENSTTLFLGYAVAGLRLKQQFEQKQIKVDADHPLFVYLPCGVGGGPGGVSFGLKLAFGEHVHCIFAEPTHSPCMLLGVYTGLHDQISVNDIGLDNITAADGLAVGRASGFVGRAMQQLIDGYYTIHDECLYELIALLNQTENIQVEPSAAAGMMGPYYVQTTPDYLALHQLSAEKLQHATHVLWATGGGMVPPDEMQKYLTHSQSN</sequence>
<reference key="1">
    <citation type="journal article" date="2008" name="J. Bacteriol.">
        <title>Comparative genome sequence analysis of multidrug-resistant Acinetobacter baumannii.</title>
        <authorList>
            <person name="Adams M.D."/>
            <person name="Goglin K."/>
            <person name="Molyneaux N."/>
            <person name="Hujer K.M."/>
            <person name="Lavender H."/>
            <person name="Jamison J.J."/>
            <person name="MacDonald I.J."/>
            <person name="Martin K.M."/>
            <person name="Russo T."/>
            <person name="Campagnari A.A."/>
            <person name="Hujer A.M."/>
            <person name="Bonomo R.A."/>
            <person name="Gill S.R."/>
        </authorList>
    </citation>
    <scope>NUCLEOTIDE SEQUENCE [LARGE SCALE GENOMIC DNA]</scope>
    <source>
        <strain>AB0057</strain>
    </source>
</reference>
<accession>B7I8P7</accession>